<comment type="function">
    <text evidence="1">Catalyzes the reversible isomerization of glucose-6-phosphate to fructose-6-phosphate.</text>
</comment>
<comment type="catalytic activity">
    <reaction evidence="1">
        <text>alpha-D-glucose 6-phosphate = beta-D-fructose 6-phosphate</text>
        <dbReference type="Rhea" id="RHEA:11816"/>
        <dbReference type="ChEBI" id="CHEBI:57634"/>
        <dbReference type="ChEBI" id="CHEBI:58225"/>
        <dbReference type="EC" id="5.3.1.9"/>
    </reaction>
</comment>
<comment type="pathway">
    <text evidence="1">Carbohydrate biosynthesis; gluconeogenesis.</text>
</comment>
<comment type="pathway">
    <text evidence="1">Carbohydrate degradation; glycolysis; D-glyceraldehyde 3-phosphate and glycerone phosphate from D-glucose: step 2/4.</text>
</comment>
<comment type="subcellular location">
    <subcellularLocation>
        <location evidence="1">Cytoplasm</location>
    </subcellularLocation>
</comment>
<comment type="similarity">
    <text evidence="1 2">Belongs to the GPI family.</text>
</comment>
<comment type="sequence caution" evidence="2">
    <conflict type="erroneous initiation">
        <sequence resource="EMBL-CDS" id="AAC23219"/>
    </conflict>
</comment>
<gene>
    <name evidence="1" type="primary">pgi</name>
    <name type="ordered locus">HI_1576</name>
</gene>
<name>G6PI_HAEIN</name>
<evidence type="ECO:0000255" key="1">
    <source>
        <dbReference type="HAMAP-Rule" id="MF_00473"/>
    </source>
</evidence>
<evidence type="ECO:0000305" key="2"/>
<reference key="1">
    <citation type="journal article" date="1995" name="Science">
        <title>Whole-genome random sequencing and assembly of Haemophilus influenzae Rd.</title>
        <authorList>
            <person name="Fleischmann R.D."/>
            <person name="Adams M.D."/>
            <person name="White O."/>
            <person name="Clayton R.A."/>
            <person name="Kirkness E.F."/>
            <person name="Kerlavage A.R."/>
            <person name="Bult C.J."/>
            <person name="Tomb J.-F."/>
            <person name="Dougherty B.A."/>
            <person name="Merrick J.M."/>
            <person name="McKenney K."/>
            <person name="Sutton G.G."/>
            <person name="FitzHugh W."/>
            <person name="Fields C.A."/>
            <person name="Gocayne J.D."/>
            <person name="Scott J.D."/>
            <person name="Shirley R."/>
            <person name="Liu L.-I."/>
            <person name="Glodek A."/>
            <person name="Kelley J.M."/>
            <person name="Weidman J.F."/>
            <person name="Phillips C.A."/>
            <person name="Spriggs T."/>
            <person name="Hedblom E."/>
            <person name="Cotton M.D."/>
            <person name="Utterback T.R."/>
            <person name="Hanna M.C."/>
            <person name="Nguyen D.T."/>
            <person name="Saudek D.M."/>
            <person name="Brandon R.C."/>
            <person name="Fine L.D."/>
            <person name="Fritchman J.L."/>
            <person name="Fuhrmann J.L."/>
            <person name="Geoghagen N.S.M."/>
            <person name="Gnehm C.L."/>
            <person name="McDonald L.A."/>
            <person name="Small K.V."/>
            <person name="Fraser C.M."/>
            <person name="Smith H.O."/>
            <person name="Venter J.C."/>
        </authorList>
    </citation>
    <scope>NUCLEOTIDE SEQUENCE [LARGE SCALE GENOMIC DNA]</scope>
    <source>
        <strain>ATCC 51907 / DSM 11121 / KW20 / Rd</strain>
    </source>
</reference>
<accession>P44312</accession>
<protein>
    <recommendedName>
        <fullName evidence="1">Glucose-6-phosphate isomerase</fullName>
        <shortName evidence="1">GPI</shortName>
        <ecNumber evidence="1">5.3.1.9</ecNumber>
    </recommendedName>
    <alternativeName>
        <fullName evidence="1">Phosphoglucose isomerase</fullName>
        <shortName evidence="1">PGI</shortName>
    </alternativeName>
    <alternativeName>
        <fullName evidence="1">Phosphohexose isomerase</fullName>
        <shortName evidence="1">PHI</shortName>
    </alternativeName>
</protein>
<sequence length="549" mass="61622">MKNINPTHTHAWKSLEAHKAELSNITIQDLFKQEKNRFDDYSLTFNNQILIDFSKNNINQTTLSHLRQLAQECALDSAKEAMFTGEKINRTENRAVLHTALRNRTNTPVLVDGKDVMPEVNAVLAKMKDFCQRIISGEWKGYTGKAITDVVNIGIGGSDLGPYMVTEALRPYKNHLNMHFVSNVDGTHIAETLKKVNPETTLFLVASKTFTTQETMTNAQSARDWLLKAAKDESAVAKHFAALSTNAKDVEKFGIDTNNMFEFWDWVGGRYSLWSAIGLSIALSIGFENFEALLNGAHEMDKHFLSTPIEQNIPTTLALVGLWNTNFLGAQTEAILPYDQYLHRFAAYFQQGNMESNGKYVDRDGNVIKNYQTGPIIWGEPGTNGQHAFYQLIHQGTTLIPCDFIAPAQRHNPLADHHNKLLSNFFAQTEALAFGKTKEEVEAEFVKAGKSLDDVKNIVPFKVFTGNKPTNSILVQKITPFTLGALIAMYEHKIFVQGVIFNIFSFDQWGVELGKQLANRILPELTDSEKVASHDSSTNGLINQFKAWR</sequence>
<feature type="chain" id="PRO_0000180650" description="Glucose-6-phosphate isomerase">
    <location>
        <begin position="1"/>
        <end position="549"/>
    </location>
</feature>
<feature type="active site" description="Proton donor" evidence="1">
    <location>
        <position position="355"/>
    </location>
</feature>
<feature type="active site" evidence="1">
    <location>
        <position position="387"/>
    </location>
</feature>
<feature type="active site" evidence="1">
    <location>
        <position position="515"/>
    </location>
</feature>
<keyword id="KW-0963">Cytoplasm</keyword>
<keyword id="KW-0312">Gluconeogenesis</keyword>
<keyword id="KW-0324">Glycolysis</keyword>
<keyword id="KW-0413">Isomerase</keyword>
<keyword id="KW-1185">Reference proteome</keyword>
<dbReference type="EC" id="5.3.1.9" evidence="1"/>
<dbReference type="EMBL" id="L42023">
    <property type="protein sequence ID" value="AAC23219.1"/>
    <property type="status" value="ALT_INIT"/>
    <property type="molecule type" value="Genomic_DNA"/>
</dbReference>
<dbReference type="PIR" id="F64130">
    <property type="entry name" value="F64130"/>
</dbReference>
<dbReference type="RefSeq" id="NP_439722.2">
    <property type="nucleotide sequence ID" value="NC_000907.1"/>
</dbReference>
<dbReference type="SMR" id="P44312"/>
<dbReference type="STRING" id="71421.HI_1576"/>
<dbReference type="EnsemblBacteria" id="AAC23219">
    <property type="protein sequence ID" value="AAC23219"/>
    <property type="gene ID" value="HI_1576"/>
</dbReference>
<dbReference type="KEGG" id="hin:HI_1576"/>
<dbReference type="PATRIC" id="fig|71421.8.peg.1649"/>
<dbReference type="eggNOG" id="COG0166">
    <property type="taxonomic scope" value="Bacteria"/>
</dbReference>
<dbReference type="HOGENOM" id="CLU_017947_3_1_6"/>
<dbReference type="OrthoDB" id="140919at2"/>
<dbReference type="PhylomeDB" id="P44312"/>
<dbReference type="BioCyc" id="HINF71421:G1GJ1-1594-MONOMER"/>
<dbReference type="UniPathway" id="UPA00109">
    <property type="reaction ID" value="UER00181"/>
</dbReference>
<dbReference type="UniPathway" id="UPA00138"/>
<dbReference type="Proteomes" id="UP000000579">
    <property type="component" value="Chromosome"/>
</dbReference>
<dbReference type="GO" id="GO:0005829">
    <property type="term" value="C:cytosol"/>
    <property type="evidence" value="ECO:0000318"/>
    <property type="project" value="GO_Central"/>
</dbReference>
<dbReference type="GO" id="GO:0097367">
    <property type="term" value="F:carbohydrate derivative binding"/>
    <property type="evidence" value="ECO:0007669"/>
    <property type="project" value="InterPro"/>
</dbReference>
<dbReference type="GO" id="GO:0004347">
    <property type="term" value="F:glucose-6-phosphate isomerase activity"/>
    <property type="evidence" value="ECO:0000318"/>
    <property type="project" value="GO_Central"/>
</dbReference>
<dbReference type="GO" id="GO:0048029">
    <property type="term" value="F:monosaccharide binding"/>
    <property type="evidence" value="ECO:0000318"/>
    <property type="project" value="GO_Central"/>
</dbReference>
<dbReference type="GO" id="GO:0006094">
    <property type="term" value="P:gluconeogenesis"/>
    <property type="evidence" value="ECO:0000318"/>
    <property type="project" value="GO_Central"/>
</dbReference>
<dbReference type="GO" id="GO:0051156">
    <property type="term" value="P:glucose 6-phosphate metabolic process"/>
    <property type="evidence" value="ECO:0000318"/>
    <property type="project" value="GO_Central"/>
</dbReference>
<dbReference type="GO" id="GO:0006096">
    <property type="term" value="P:glycolytic process"/>
    <property type="evidence" value="ECO:0000318"/>
    <property type="project" value="GO_Central"/>
</dbReference>
<dbReference type="CDD" id="cd05015">
    <property type="entry name" value="SIS_PGI_1"/>
    <property type="match status" value="1"/>
</dbReference>
<dbReference type="CDD" id="cd05016">
    <property type="entry name" value="SIS_PGI_2"/>
    <property type="match status" value="1"/>
</dbReference>
<dbReference type="FunFam" id="1.10.1390.10:FF:000001">
    <property type="entry name" value="Glucose-6-phosphate isomerase"/>
    <property type="match status" value="1"/>
</dbReference>
<dbReference type="FunFam" id="3.40.50.10490:FF:000004">
    <property type="entry name" value="Glucose-6-phosphate isomerase"/>
    <property type="match status" value="1"/>
</dbReference>
<dbReference type="Gene3D" id="1.10.1390.10">
    <property type="match status" value="1"/>
</dbReference>
<dbReference type="Gene3D" id="3.40.50.10490">
    <property type="entry name" value="Glucose-6-phosphate isomerase like protein, domain 1"/>
    <property type="match status" value="2"/>
</dbReference>
<dbReference type="HAMAP" id="MF_00473">
    <property type="entry name" value="G6P_isomerase"/>
    <property type="match status" value="1"/>
</dbReference>
<dbReference type="InterPro" id="IPR001672">
    <property type="entry name" value="G6P_Isomerase"/>
</dbReference>
<dbReference type="InterPro" id="IPR023096">
    <property type="entry name" value="G6P_Isomerase_C"/>
</dbReference>
<dbReference type="InterPro" id="IPR018189">
    <property type="entry name" value="Phosphoglucose_isomerase_CS"/>
</dbReference>
<dbReference type="InterPro" id="IPR046348">
    <property type="entry name" value="SIS_dom_sf"/>
</dbReference>
<dbReference type="InterPro" id="IPR035476">
    <property type="entry name" value="SIS_PGI_1"/>
</dbReference>
<dbReference type="InterPro" id="IPR035482">
    <property type="entry name" value="SIS_PGI_2"/>
</dbReference>
<dbReference type="NCBIfam" id="NF001211">
    <property type="entry name" value="PRK00179.1"/>
    <property type="match status" value="1"/>
</dbReference>
<dbReference type="PANTHER" id="PTHR11469">
    <property type="entry name" value="GLUCOSE-6-PHOSPHATE ISOMERASE"/>
    <property type="match status" value="1"/>
</dbReference>
<dbReference type="PANTHER" id="PTHR11469:SF1">
    <property type="entry name" value="GLUCOSE-6-PHOSPHATE ISOMERASE"/>
    <property type="match status" value="1"/>
</dbReference>
<dbReference type="Pfam" id="PF00342">
    <property type="entry name" value="PGI"/>
    <property type="match status" value="1"/>
</dbReference>
<dbReference type="PRINTS" id="PR00662">
    <property type="entry name" value="G6PISOMERASE"/>
</dbReference>
<dbReference type="SUPFAM" id="SSF53697">
    <property type="entry name" value="SIS domain"/>
    <property type="match status" value="1"/>
</dbReference>
<dbReference type="PROSITE" id="PS00765">
    <property type="entry name" value="P_GLUCOSE_ISOMERASE_1"/>
    <property type="match status" value="1"/>
</dbReference>
<dbReference type="PROSITE" id="PS00174">
    <property type="entry name" value="P_GLUCOSE_ISOMERASE_2"/>
    <property type="match status" value="1"/>
</dbReference>
<dbReference type="PROSITE" id="PS51463">
    <property type="entry name" value="P_GLUCOSE_ISOMERASE_3"/>
    <property type="match status" value="1"/>
</dbReference>
<organism>
    <name type="scientific">Haemophilus influenzae (strain ATCC 51907 / DSM 11121 / KW20 / Rd)</name>
    <dbReference type="NCBI Taxonomy" id="71421"/>
    <lineage>
        <taxon>Bacteria</taxon>
        <taxon>Pseudomonadati</taxon>
        <taxon>Pseudomonadota</taxon>
        <taxon>Gammaproteobacteria</taxon>
        <taxon>Pasteurellales</taxon>
        <taxon>Pasteurellaceae</taxon>
        <taxon>Haemophilus</taxon>
    </lineage>
</organism>
<proteinExistence type="inferred from homology"/>